<proteinExistence type="inferred from homology"/>
<protein>
    <recommendedName>
        <fullName>Non-structural protein P8</fullName>
    </recommendedName>
    <alternativeName>
        <fullName>Non-structural protein NS3</fullName>
    </alternativeName>
    <component>
        <recommendedName>
            <fullName>Non-structural protein NS3A</fullName>
        </recommendedName>
    </component>
</protein>
<feature type="chain" id="PRO_0000040630" description="Non-structural protein P8">
    <location>
        <begin position="1"/>
        <end position="229"/>
    </location>
</feature>
<feature type="chain" id="PRO_0000040631" description="Non-structural protein NS3A">
    <location>
        <begin position="14"/>
        <end position="229"/>
    </location>
</feature>
<feature type="transmembrane region" description="Helical" evidence="2">
    <location>
        <begin position="119"/>
        <end position="139"/>
    </location>
</feature>
<feature type="transmembrane region" description="Helical" evidence="2">
    <location>
        <begin position="162"/>
        <end position="182"/>
    </location>
</feature>
<feature type="region of interest" description="Disordered" evidence="3">
    <location>
        <begin position="13"/>
        <end position="46"/>
    </location>
</feature>
<feature type="compositionally biased region" description="Basic and acidic residues" evidence="3">
    <location>
        <begin position="13"/>
        <end position="31"/>
    </location>
</feature>
<feature type="compositionally biased region" description="Low complexity" evidence="3">
    <location>
        <begin position="36"/>
        <end position="46"/>
    </location>
</feature>
<comment type="function">
    <text evidence="1">Plays a role in the inhibition of host innate immune response. Interacts with host OPTN and thus inhibits the recruitment of TBK1 to the host Golgi apparatus. In turn, downstream partner IRF3 cannot be activated and IFN-beta production is impaired.</text>
</comment>
<comment type="function">
    <text evidence="1">Facilitates viral particle release either by increasing plasma membrane permeability through a viroporin-like activity or by viral budding.</text>
</comment>
<comment type="subunit">
    <text evidence="1">Forms homooligomers via coiled-coil motif. Interacts with host OPTN; this interaction inhibits innate immune response.</text>
</comment>
<comment type="subcellular location">
    <subcellularLocation>
        <location evidence="1">Host cell membrane</location>
        <topology evidence="2">Multi-pass membrane protein</topology>
    </subcellularLocation>
    <subcellularLocation>
        <location evidence="1">Host Golgi apparatus</location>
    </subcellularLocation>
</comment>
<comment type="similarity">
    <text evidence="4">Belongs to the orbivirus NS3 family.</text>
</comment>
<reference key="1">
    <citation type="journal article" date="1992" name="Virus Res.">
        <title>Sequence conservation among the cognate nonstructural NS3/3A protein genes of six bluetongue viruses.</title>
        <authorList>
            <person name="Hwang G.-Y."/>
            <person name="Yang Y.-Y."/>
            <person name="Chiou J.-F."/>
            <person name="Li J.K.-K."/>
        </authorList>
    </citation>
    <scope>NUCLEOTIDE SEQUENCE [GENOMIC RNA]</scope>
</reference>
<gene>
    <name type="primary">Segment-10</name>
</gene>
<accession>Q04684</accession>
<sequence>MLSGLIQRFEEEKMKHNQDRVEEPSQVRVDDTISQPPRYAPSAPMPSSMPTVALEILDKAMSNTTGATQTQKAEKAAFASYAGVARDDVRLRQIKRHVNEQILPKLKSDLSGLKKKRAIIHTTLLVAAVVALLTSVCTLSSDMSVAFKINGTKTEVPSWFKSLNPMLGVVNLGATFLMMVCAKSERALNQQIDMIKKEVMKKQSYNDAVRMSFTEFSSIPLDGLEMPLT</sequence>
<keyword id="KW-1032">Host cell membrane</keyword>
<keyword id="KW-1040">Host Golgi apparatus</keyword>
<keyword id="KW-1043">Host membrane</keyword>
<keyword id="KW-0945">Host-virus interaction</keyword>
<keyword id="KW-1090">Inhibition of host innate immune response by virus</keyword>
<keyword id="KW-0472">Membrane</keyword>
<keyword id="KW-0812">Transmembrane</keyword>
<keyword id="KW-1133">Transmembrane helix</keyword>
<keyword id="KW-0899">Viral immunoevasion</keyword>
<organismHost>
    <name type="scientific">Antilocapra americana</name>
    <name type="common">Pronghorn</name>
    <dbReference type="NCBI Taxonomy" id="9891"/>
</organismHost>
<organismHost>
    <name type="scientific">Bos taurus</name>
    <name type="common">Bovine</name>
    <dbReference type="NCBI Taxonomy" id="9913"/>
</organismHost>
<organismHost>
    <name type="scientific">Capra hircus</name>
    <name type="common">Goat</name>
    <dbReference type="NCBI Taxonomy" id="9925"/>
</organismHost>
<organismHost>
    <name type="scientific">Culicoides variipennis</name>
    <name type="common">Biting midge</name>
    <dbReference type="NCBI Taxonomy" id="46212"/>
</organismHost>
<organismHost>
    <name type="scientific">Ovis aries</name>
    <name type="common">Sheep</name>
    <dbReference type="NCBI Taxonomy" id="9940"/>
</organismHost>
<name>VP8_BTV11</name>
<organism>
    <name type="scientific">Bluetongue virus 11 (isolate USA)</name>
    <name type="common">BTV 11</name>
    <dbReference type="NCBI Taxonomy" id="33716"/>
    <lineage>
        <taxon>Viruses</taxon>
        <taxon>Riboviria</taxon>
        <taxon>Orthornavirae</taxon>
        <taxon>Duplornaviricota</taxon>
        <taxon>Resentoviricetes</taxon>
        <taxon>Reovirales</taxon>
        <taxon>Sedoreoviridae</taxon>
        <taxon>Orbivirus</taxon>
        <taxon>Bluetongue virus</taxon>
    </lineage>
</organism>
<dbReference type="EMBL" id="L08631">
    <property type="protein sequence ID" value="AAA42835.1"/>
    <property type="molecule type" value="Genomic_RNA"/>
</dbReference>
<dbReference type="SMR" id="Q04684"/>
<dbReference type="GO" id="GO:0044177">
    <property type="term" value="C:host cell Golgi apparatus"/>
    <property type="evidence" value="ECO:0007669"/>
    <property type="project" value="UniProtKB-SubCell"/>
</dbReference>
<dbReference type="GO" id="GO:0020002">
    <property type="term" value="C:host cell plasma membrane"/>
    <property type="evidence" value="ECO:0007669"/>
    <property type="project" value="UniProtKB-SubCell"/>
</dbReference>
<dbReference type="GO" id="GO:0016020">
    <property type="term" value="C:membrane"/>
    <property type="evidence" value="ECO:0007669"/>
    <property type="project" value="UniProtKB-KW"/>
</dbReference>
<dbReference type="GO" id="GO:0052170">
    <property type="term" value="P:symbiont-mediated suppression of host innate immune response"/>
    <property type="evidence" value="ECO:0007669"/>
    <property type="project" value="UniProtKB-KW"/>
</dbReference>
<dbReference type="InterPro" id="IPR002565">
    <property type="entry name" value="Orbi_NS3"/>
</dbReference>
<dbReference type="Pfam" id="PF01616">
    <property type="entry name" value="Orbi_NS3"/>
    <property type="match status" value="1"/>
</dbReference>
<evidence type="ECO:0000250" key="1">
    <source>
        <dbReference type="UniProtKB" id="P08363"/>
    </source>
</evidence>
<evidence type="ECO:0000255" key="2"/>
<evidence type="ECO:0000256" key="3">
    <source>
        <dbReference type="SAM" id="MobiDB-lite"/>
    </source>
</evidence>
<evidence type="ECO:0000305" key="4"/>